<dbReference type="GO" id="GO:0006952">
    <property type="term" value="P:defense response"/>
    <property type="evidence" value="ECO:0007669"/>
    <property type="project" value="UniProtKB-KW"/>
</dbReference>
<evidence type="ECO:0000269" key="1">
    <source ref="1"/>
</evidence>
<evidence type="ECO:0000303" key="2">
    <source ref="1"/>
</evidence>
<evidence type="ECO:0000305" key="3"/>
<keyword id="KW-0903">Direct protein sequencing</keyword>
<keyword id="KW-0568">Pathogenesis-related protein</keyword>
<keyword id="KW-0611">Plant defense</keyword>
<name>PL6_LUPLU</name>
<protein>
    <recommendedName>
        <fullName>Protein PR-L6</fullName>
    </recommendedName>
</protein>
<feature type="chain" id="PRO_0000154199" description="Protein PR-L6">
    <location>
        <begin position="1"/>
        <end position="20" status="greater than"/>
    </location>
</feature>
<feature type="non-terminal residue" evidence="2">
    <location>
        <position position="20"/>
    </location>
</feature>
<proteinExistence type="evidence at protein level"/>
<reference evidence="3" key="1">
    <citation type="journal article" date="1999" name="J. Plant Physiol.">
        <title>Heavy metal-induced polypeptides in lupin roots are similar to pathogenesis-related proteins.</title>
        <authorList>
            <person name="Przymusinski R."/>
            <person name="Gwozdz E.A."/>
        </authorList>
    </citation>
    <scope>PROTEIN SEQUENCE</scope>
    <scope>INDUCTION</scope>
    <source>
        <strain>cv. Ventus</strain>
        <tissue>Root tip</tissue>
    </source>
</reference>
<sequence length="20" mass="2190">GVFTFEDESTSTVAPAKLYK</sequence>
<comment type="induction">
    <text evidence="1">By heavy metal ions.</text>
</comment>
<comment type="similarity">
    <text evidence="3">Belongs to the BetVI family.</text>
</comment>
<organism evidence="3">
    <name type="scientific">Lupinus luteus</name>
    <name type="common">European yellow lupine</name>
    <dbReference type="NCBI Taxonomy" id="3873"/>
    <lineage>
        <taxon>Eukaryota</taxon>
        <taxon>Viridiplantae</taxon>
        <taxon>Streptophyta</taxon>
        <taxon>Embryophyta</taxon>
        <taxon>Tracheophyta</taxon>
        <taxon>Spermatophyta</taxon>
        <taxon>Magnoliopsida</taxon>
        <taxon>eudicotyledons</taxon>
        <taxon>Gunneridae</taxon>
        <taxon>Pentapetalae</taxon>
        <taxon>rosids</taxon>
        <taxon>fabids</taxon>
        <taxon>Fabales</taxon>
        <taxon>Fabaceae</taxon>
        <taxon>Papilionoideae</taxon>
        <taxon>50 kb inversion clade</taxon>
        <taxon>genistoids sensu lato</taxon>
        <taxon>core genistoids</taxon>
        <taxon>Genisteae</taxon>
        <taxon>Lupinus</taxon>
    </lineage>
</organism>
<accession>P83368</accession>